<gene>
    <name evidence="1" type="primary">clpP</name>
    <name type="ordered locus">SUN_0012</name>
</gene>
<evidence type="ECO:0000255" key="1">
    <source>
        <dbReference type="HAMAP-Rule" id="MF_00444"/>
    </source>
</evidence>
<feature type="chain" id="PRO_1000026139" description="ATP-dependent Clp protease proteolytic subunit">
    <location>
        <begin position="1"/>
        <end position="195"/>
    </location>
</feature>
<feature type="active site" description="Nucleophile" evidence="1">
    <location>
        <position position="98"/>
    </location>
</feature>
<feature type="active site" evidence="1">
    <location>
        <position position="123"/>
    </location>
</feature>
<protein>
    <recommendedName>
        <fullName evidence="1">ATP-dependent Clp protease proteolytic subunit</fullName>
        <ecNumber evidence="1">3.4.21.92</ecNumber>
    </recommendedName>
    <alternativeName>
        <fullName evidence="1">Endopeptidase Clp</fullName>
    </alternativeName>
</protein>
<sequence>MSYIPYVVEQTGRGERSYDIYSRLLKDRIIMLSGEVNDQVASSIVAQLLFLEAQDPDKDIYFYINSPGGVITSGLSMFDTMNYIKPDIVTICIGQAASMGAFLLASGTKGKRYALPHARIMIHQPSGGAQGQSTDIQIQAQEIQRLKDTLNEIMAEKTGKTAKRIEKDTERDNFMSAKEAVEYGLIDKVLTKSFT</sequence>
<proteinExistence type="inferred from homology"/>
<dbReference type="EC" id="3.4.21.92" evidence="1"/>
<dbReference type="EMBL" id="AP009179">
    <property type="protein sequence ID" value="BAF70973.1"/>
    <property type="molecule type" value="Genomic_DNA"/>
</dbReference>
<dbReference type="RefSeq" id="WP_011979706.1">
    <property type="nucleotide sequence ID" value="NC_009663.1"/>
</dbReference>
<dbReference type="SMR" id="A6Q675"/>
<dbReference type="STRING" id="387093.SUN_0012"/>
<dbReference type="MEROPS" id="S14.001"/>
<dbReference type="KEGG" id="sun:SUN_0012"/>
<dbReference type="eggNOG" id="COG0740">
    <property type="taxonomic scope" value="Bacteria"/>
</dbReference>
<dbReference type="HOGENOM" id="CLU_058707_3_2_7"/>
<dbReference type="OrthoDB" id="9802800at2"/>
<dbReference type="Proteomes" id="UP000006378">
    <property type="component" value="Chromosome"/>
</dbReference>
<dbReference type="GO" id="GO:0005737">
    <property type="term" value="C:cytoplasm"/>
    <property type="evidence" value="ECO:0007669"/>
    <property type="project" value="UniProtKB-SubCell"/>
</dbReference>
<dbReference type="GO" id="GO:0009368">
    <property type="term" value="C:endopeptidase Clp complex"/>
    <property type="evidence" value="ECO:0007669"/>
    <property type="project" value="TreeGrafter"/>
</dbReference>
<dbReference type="GO" id="GO:0004176">
    <property type="term" value="F:ATP-dependent peptidase activity"/>
    <property type="evidence" value="ECO:0007669"/>
    <property type="project" value="InterPro"/>
</dbReference>
<dbReference type="GO" id="GO:0051117">
    <property type="term" value="F:ATPase binding"/>
    <property type="evidence" value="ECO:0007669"/>
    <property type="project" value="TreeGrafter"/>
</dbReference>
<dbReference type="GO" id="GO:0004252">
    <property type="term" value="F:serine-type endopeptidase activity"/>
    <property type="evidence" value="ECO:0007669"/>
    <property type="project" value="UniProtKB-UniRule"/>
</dbReference>
<dbReference type="GO" id="GO:0006515">
    <property type="term" value="P:protein quality control for misfolded or incompletely synthesized proteins"/>
    <property type="evidence" value="ECO:0007669"/>
    <property type="project" value="TreeGrafter"/>
</dbReference>
<dbReference type="CDD" id="cd07017">
    <property type="entry name" value="S14_ClpP_2"/>
    <property type="match status" value="1"/>
</dbReference>
<dbReference type="FunFam" id="3.90.226.10:FF:000001">
    <property type="entry name" value="ATP-dependent Clp protease proteolytic subunit"/>
    <property type="match status" value="1"/>
</dbReference>
<dbReference type="Gene3D" id="3.90.226.10">
    <property type="entry name" value="2-enoyl-CoA Hydratase, Chain A, domain 1"/>
    <property type="match status" value="1"/>
</dbReference>
<dbReference type="HAMAP" id="MF_00444">
    <property type="entry name" value="ClpP"/>
    <property type="match status" value="1"/>
</dbReference>
<dbReference type="InterPro" id="IPR001907">
    <property type="entry name" value="ClpP"/>
</dbReference>
<dbReference type="InterPro" id="IPR029045">
    <property type="entry name" value="ClpP/crotonase-like_dom_sf"/>
</dbReference>
<dbReference type="InterPro" id="IPR023562">
    <property type="entry name" value="ClpP/TepA"/>
</dbReference>
<dbReference type="InterPro" id="IPR033135">
    <property type="entry name" value="ClpP_His_AS"/>
</dbReference>
<dbReference type="InterPro" id="IPR018215">
    <property type="entry name" value="ClpP_Ser_AS"/>
</dbReference>
<dbReference type="NCBIfam" id="TIGR00493">
    <property type="entry name" value="clpP"/>
    <property type="match status" value="1"/>
</dbReference>
<dbReference type="NCBIfam" id="NF001368">
    <property type="entry name" value="PRK00277.1"/>
    <property type="match status" value="1"/>
</dbReference>
<dbReference type="NCBIfam" id="NF009205">
    <property type="entry name" value="PRK12553.1"/>
    <property type="match status" value="1"/>
</dbReference>
<dbReference type="PANTHER" id="PTHR10381">
    <property type="entry name" value="ATP-DEPENDENT CLP PROTEASE PROTEOLYTIC SUBUNIT"/>
    <property type="match status" value="1"/>
</dbReference>
<dbReference type="PANTHER" id="PTHR10381:SF70">
    <property type="entry name" value="ATP-DEPENDENT CLP PROTEASE PROTEOLYTIC SUBUNIT"/>
    <property type="match status" value="1"/>
</dbReference>
<dbReference type="Pfam" id="PF00574">
    <property type="entry name" value="CLP_protease"/>
    <property type="match status" value="1"/>
</dbReference>
<dbReference type="PRINTS" id="PR00127">
    <property type="entry name" value="CLPPROTEASEP"/>
</dbReference>
<dbReference type="SUPFAM" id="SSF52096">
    <property type="entry name" value="ClpP/crotonase"/>
    <property type="match status" value="1"/>
</dbReference>
<dbReference type="PROSITE" id="PS00382">
    <property type="entry name" value="CLP_PROTEASE_HIS"/>
    <property type="match status" value="1"/>
</dbReference>
<dbReference type="PROSITE" id="PS00381">
    <property type="entry name" value="CLP_PROTEASE_SER"/>
    <property type="match status" value="1"/>
</dbReference>
<keyword id="KW-0963">Cytoplasm</keyword>
<keyword id="KW-0378">Hydrolase</keyword>
<keyword id="KW-0645">Protease</keyword>
<keyword id="KW-0720">Serine protease</keyword>
<accession>A6Q675</accession>
<reference key="1">
    <citation type="journal article" date="2007" name="Proc. Natl. Acad. Sci. U.S.A.">
        <title>Deep-sea vent epsilon-proteobacterial genomes provide insights into emergence of pathogens.</title>
        <authorList>
            <person name="Nakagawa S."/>
            <person name="Takaki Y."/>
            <person name="Shimamura S."/>
            <person name="Reysenbach A.-L."/>
            <person name="Takai K."/>
            <person name="Horikoshi K."/>
        </authorList>
    </citation>
    <scope>NUCLEOTIDE SEQUENCE [LARGE SCALE GENOMIC DNA]</scope>
    <source>
        <strain>NBC37-1</strain>
    </source>
</reference>
<comment type="function">
    <text evidence="1">Cleaves peptides in various proteins in a process that requires ATP hydrolysis. Has a chymotrypsin-like activity. Plays a major role in the degradation of misfolded proteins.</text>
</comment>
<comment type="catalytic activity">
    <reaction evidence="1">
        <text>Hydrolysis of proteins to small peptides in the presence of ATP and magnesium. alpha-casein is the usual test substrate. In the absence of ATP, only oligopeptides shorter than five residues are hydrolyzed (such as succinyl-Leu-Tyr-|-NHMec, and Leu-Tyr-Leu-|-Tyr-Trp, in which cleavage of the -Tyr-|-Leu- and -Tyr-|-Trp bonds also occurs).</text>
        <dbReference type="EC" id="3.4.21.92"/>
    </reaction>
</comment>
<comment type="subunit">
    <text evidence="1">Fourteen ClpP subunits assemble into 2 heptameric rings which stack back to back to give a disk-like structure with a central cavity, resembling the structure of eukaryotic proteasomes.</text>
</comment>
<comment type="subcellular location">
    <subcellularLocation>
        <location evidence="1">Cytoplasm</location>
    </subcellularLocation>
</comment>
<comment type="similarity">
    <text evidence="1">Belongs to the peptidase S14 family.</text>
</comment>
<organism>
    <name type="scientific">Sulfurovum sp. (strain NBC37-1)</name>
    <dbReference type="NCBI Taxonomy" id="387093"/>
    <lineage>
        <taxon>Bacteria</taxon>
        <taxon>Pseudomonadati</taxon>
        <taxon>Campylobacterota</taxon>
        <taxon>Epsilonproteobacteria</taxon>
        <taxon>Campylobacterales</taxon>
        <taxon>Sulfurovaceae</taxon>
        <taxon>Sulfurovum</taxon>
    </lineage>
</organism>
<name>CLPP_SULNB</name>